<keyword id="KW-0002">3D-structure</keyword>
<keyword id="KW-0068">Autocatalytic cleavage</keyword>
<keyword id="KW-0180">Complement pathway</keyword>
<keyword id="KW-0903">Direct protein sequencing</keyword>
<keyword id="KW-0225">Disease variant</keyword>
<keyword id="KW-1015">Disulfide bond</keyword>
<keyword id="KW-0245">EGF-like domain</keyword>
<keyword id="KW-0248">Ehlers-Danlos syndrome</keyword>
<keyword id="KW-0325">Glycoprotein</keyword>
<keyword id="KW-0378">Hydrolase</keyword>
<keyword id="KW-0379">Hydroxylation</keyword>
<keyword id="KW-0391">Immunity</keyword>
<keyword id="KW-0399">Innate immunity</keyword>
<keyword id="KW-0597">Phosphoprotein</keyword>
<keyword id="KW-0645">Protease</keyword>
<keyword id="KW-1267">Proteomics identification</keyword>
<keyword id="KW-1185">Reference proteome</keyword>
<keyword id="KW-0677">Repeat</keyword>
<keyword id="KW-0964">Secreted</keyword>
<keyword id="KW-0720">Serine protease</keyword>
<keyword id="KW-0732">Signal</keyword>
<keyword id="KW-0768">Sushi</keyword>
<name>C1R_HUMAN</name>
<sequence>MWLLYLLVPALFCRAGGSIPIPQKLFGEVTSPLFPKPYPNNFETTTVITVPTGYRVKLVFQQFDLEPSEGCFYDYVKISADKKSLGRFCGQLGSPLGNPPGKKEFMSQGNKMLLTFHTDFSNEENGTIMFYKGFLAYYQAVDLDECASRSKSGEEDPQPQCQHLCHNYVGGYFCSCRPGYELQEDTHSCQAECSSELYTEASGYISSLEYPRSYPPDLRCNYSIRVERGLTLHLKFLEPFDIDDHQQVHCPYDQLQIYANGKNIGEFCGKQRPPDLDTSSNAVDLLFFTDESGDSRGWKLRYTTEIIKCPQPKTLDEFTIIQNLQPQYQFRDYFIATCKQGYQLIEGNQVLHSFTAVCQDDGTWHRAMPRCKIKDCGQPRNLPNGDFRYTTTMGVNTYKARIQYYCHEPYYKMQTRAGSRESEQGVYTCTAQGIWKNEQKGEKIPRCLPVCGKPVNPVEQRQRIIGGQKAKMGNFPWQVFTNIHGRGGGALLGDRWILTAAHTLYPKEHEAQSNASLDVFLGHTNVEELMKLGNHPIRRVSVHPDYRQDESYNFEGDIALLELENSVTLGPNLLPICLPDNDTFYDLGLMGYVSGFGVMEEKIAHDLRFVRLPVANPQACENWLRGKNRMDVFSQNMFCAGHPSLKQDACQGDSGGVFAVRDPNTDRWVATGIVSWGIGCSRGYGFYTKVLNYVDWIKKEMEEED</sequence>
<feature type="signal peptide" evidence="27">
    <location>
        <begin position="1"/>
        <end position="17"/>
    </location>
</feature>
<feature type="chain" id="PRO_0000027577" description="Complement C1r subcomponent">
    <location>
        <begin position="18"/>
        <end position="705"/>
    </location>
</feature>
<feature type="chain" id="PRO_0000027578" description="Complement C1r subcomponent heavy chain" evidence="27">
    <location>
        <begin position="18"/>
        <end position="463"/>
    </location>
</feature>
<feature type="chain" id="PRO_0000027579" description="Complement C1r subcomponent light chain" evidence="31 43">
    <location>
        <begin position="464"/>
        <end position="705"/>
    </location>
</feature>
<feature type="domain" description="CUB 1" evidence="2">
    <location>
        <begin position="18"/>
        <end position="141"/>
    </location>
</feature>
<feature type="domain" description="EGF-like; calcium-binding" evidence="1">
    <location>
        <begin position="142"/>
        <end position="190"/>
    </location>
</feature>
<feature type="domain" description="CUB 2" evidence="2">
    <location>
        <begin position="193"/>
        <end position="305"/>
    </location>
</feature>
<feature type="domain" description="Sushi 1" evidence="4">
    <location>
        <begin position="307"/>
        <end position="373"/>
    </location>
</feature>
<feature type="domain" description="Sushi 2" evidence="4">
    <location>
        <begin position="374"/>
        <end position="449"/>
    </location>
</feature>
<feature type="domain" description="Peptidase S1" evidence="3">
    <location>
        <begin position="464"/>
        <end position="702"/>
    </location>
</feature>
<feature type="active site" description="Charge relay system" evidence="8">
    <location>
        <position position="502"/>
    </location>
</feature>
<feature type="active site" description="Charge relay system" evidence="8">
    <location>
        <position position="557"/>
    </location>
</feature>
<feature type="active site" description="Charge relay system" evidence="8 40 41 42">
    <location>
        <position position="654"/>
    </location>
</feature>
<feature type="binding site" evidence="21 51">
    <location>
        <position position="66"/>
    </location>
    <ligand>
        <name>Ca(2+)</name>
        <dbReference type="ChEBI" id="CHEBI:29108"/>
        <label>1</label>
    </ligand>
</feature>
<feature type="binding site" evidence="21 51">
    <location>
        <position position="74"/>
    </location>
    <ligand>
        <name>Ca(2+)</name>
        <dbReference type="ChEBI" id="CHEBI:29108"/>
        <label>1</label>
    </ligand>
</feature>
<feature type="binding site" evidence="21 51">
    <location>
        <position position="119"/>
    </location>
    <ligand>
        <name>Ca(2+)</name>
        <dbReference type="ChEBI" id="CHEBI:29108"/>
        <label>1</label>
    </ligand>
</feature>
<feature type="binding site" evidence="21 51">
    <location>
        <position position="142"/>
    </location>
    <ligand>
        <name>Ca(2+)</name>
        <dbReference type="ChEBI" id="CHEBI:29108"/>
        <label>2</label>
    </ligand>
</feature>
<feature type="binding site" evidence="21 51">
    <location>
        <position position="143"/>
    </location>
    <ligand>
        <name>Ca(2+)</name>
        <dbReference type="ChEBI" id="CHEBI:29108"/>
        <label>2</label>
    </ligand>
</feature>
<feature type="binding site" evidence="21 51">
    <location>
        <position position="145"/>
    </location>
    <ligand>
        <name>Ca(2+)</name>
        <dbReference type="ChEBI" id="CHEBI:29108"/>
        <label>2</label>
    </ligand>
</feature>
<feature type="binding site" evidence="21 51">
    <location>
        <position position="167"/>
    </location>
    <ligand>
        <name>Ca(2+)</name>
        <dbReference type="ChEBI" id="CHEBI:29108"/>
        <label>2</label>
    </ligand>
</feature>
<feature type="binding site" evidence="21 51">
    <location>
        <position position="168"/>
    </location>
    <ligand>
        <name>Ca(2+)</name>
        <dbReference type="ChEBI" id="CHEBI:29108"/>
        <label>2</label>
    </ligand>
</feature>
<feature type="binding site" evidence="21 51">
    <location>
        <position position="171"/>
    </location>
    <ligand>
        <name>Ca(2+)</name>
        <dbReference type="ChEBI" id="CHEBI:29108"/>
        <label>2</label>
    </ligand>
</feature>
<feature type="binding site" evidence="21 51">
    <location>
        <position position="243"/>
    </location>
    <ligand>
        <name>Ca(2+)</name>
        <dbReference type="ChEBI" id="CHEBI:29108"/>
        <label>3</label>
    </ligand>
</feature>
<feature type="binding site" evidence="21 51">
    <location>
        <position position="253"/>
    </location>
    <ligand>
        <name>Ca(2+)</name>
        <dbReference type="ChEBI" id="CHEBI:29108"/>
        <label>3</label>
    </ligand>
</feature>
<feature type="binding site" evidence="21 51">
    <location>
        <position position="290"/>
    </location>
    <ligand>
        <name>Ca(2+)</name>
        <dbReference type="ChEBI" id="CHEBI:29108"/>
        <label>3</label>
    </ligand>
</feature>
<feature type="binding site" evidence="21 51">
    <location>
        <position position="294"/>
    </location>
    <ligand>
        <name>Ca(2+)</name>
        <dbReference type="ChEBI" id="CHEBI:29108"/>
        <label>3</label>
    </ligand>
</feature>
<feature type="site" description="Cleavage; by autolysis" evidence="5 6 35">
    <location>
        <begin position="463"/>
        <end position="464"/>
    </location>
</feature>
<feature type="modified residue" description="(3R)-3-hydroxyasparagine" evidence="19">
    <location>
        <position position="167"/>
    </location>
</feature>
<feature type="modified residue" description="Phosphoserine; by CK2" evidence="34">
    <location>
        <position position="206"/>
    </location>
</feature>
<feature type="glycosylation site" description="N-linked (GlcNAc...) asparagine" evidence="11 21 48 50 51">
    <location>
        <position position="125"/>
    </location>
</feature>
<feature type="glycosylation site" description="N-linked (GlcNAc...) asparagine" evidence="11">
    <location>
        <position position="221"/>
    </location>
</feature>
<feature type="glycosylation site" description="N-linked (GlcNAc...) asparagine" evidence="11 13">
    <location>
        <position position="514"/>
    </location>
</feature>
<feature type="glycosylation site" description="N-linked (GlcNAc...) asparagine" evidence="7">
    <location>
        <position position="581"/>
    </location>
</feature>
<feature type="disulfide bond" evidence="21 48 50 51">
    <location>
        <begin position="71"/>
        <end position="89"/>
    </location>
</feature>
<feature type="disulfide bond" evidence="21 36 45 48 50 51">
    <location>
        <begin position="146"/>
        <end position="165"/>
    </location>
</feature>
<feature type="disulfide bond" evidence="21 36 45 48 50 51">
    <location>
        <begin position="161"/>
        <end position="174"/>
    </location>
</feature>
<feature type="disulfide bond" evidence="21 36 45 48 50 51">
    <location>
        <begin position="176"/>
        <end position="189"/>
    </location>
</feature>
<feature type="disulfide bond" evidence="21 48 50 51">
    <location>
        <begin position="193"/>
        <end position="220"/>
    </location>
</feature>
<feature type="disulfide bond" evidence="21 48 50 51">
    <location>
        <begin position="250"/>
        <end position="268"/>
    </location>
</feature>
<feature type="disulfide bond" evidence="7 12 46 47">
    <location>
        <begin position="309"/>
        <end position="358"/>
    </location>
</feature>
<feature type="disulfide bond" evidence="7 12 46 47">
    <location>
        <begin position="338"/>
        <end position="371"/>
    </location>
</feature>
<feature type="disulfide bond" evidence="7 12 46 47">
    <location>
        <begin position="376"/>
        <end position="429"/>
    </location>
</feature>
<feature type="disulfide bond" evidence="7 12 46 47">
    <location>
        <begin position="406"/>
        <end position="447"/>
    </location>
</feature>
<feature type="disulfide bond" description="Interchain (between heavy and light chains)" evidence="7 12 46 47">
    <location>
        <begin position="451"/>
        <end position="577"/>
    </location>
</feature>
<feature type="disulfide bond" evidence="7 12 46 47">
    <location>
        <begin position="620"/>
        <end position="639"/>
    </location>
</feature>
<feature type="disulfide bond" evidence="7 12 46 47">
    <location>
        <begin position="650"/>
        <end position="680"/>
    </location>
</feature>
<feature type="sequence variant" id="VAR_077106" description="In EDSPD1; the mutant is not secreted but retained intracellularly; requires 2 nucleotide substitutions." evidence="17">
    <original>V</original>
    <variation>D</variation>
    <location>
        <position position="50"/>
    </location>
</feature>
<feature type="sequence variant" id="VAR_018667" description="In dbSNP:rs1278295523." evidence="9">
    <original>Y</original>
    <variation>H</variation>
    <location>
        <position position="131"/>
    </location>
</feature>
<feature type="sequence variant" id="VAR_016103" description="In dbSNP:rs1801046." evidence="9 10 26 33">
    <original>S</original>
    <variation>L</variation>
    <location>
        <position position="152"/>
    </location>
</feature>
<feature type="sequence variant" id="VAR_018668" description="In dbSNP:rs144141261." evidence="9">
    <original>H</original>
    <variation>Y</variation>
    <location>
        <position position="163"/>
    </location>
</feature>
<feature type="sequence variant" id="VAR_018669" description="Confirmed at protein level; dbSNP:rs1126605." evidence="9 16">
    <original>E</original>
    <variation>K</variation>
    <location>
        <position position="184"/>
    </location>
</feature>
<feature type="sequence variant" id="VAR_047933" description="In dbSNP:rs4519167." evidence="9 10 25 26">
    <original>T</original>
    <variation>R</variation>
    <location>
        <position position="186"/>
    </location>
</feature>
<feature type="sequence variant" id="VAR_018670" description="Confirmed at protein level; dbSNP:rs3813728." evidence="9 16">
    <original>G</original>
    <variation>R</variation>
    <location>
        <position position="261"/>
    </location>
</feature>
<feature type="sequence variant" id="VAR_077107" description="In EDSPD1; uncertain significance; dbSNP:rs1057518643." evidence="17">
    <original>D</original>
    <variation>G</variation>
    <location>
        <position position="290"/>
    </location>
</feature>
<feature type="sequence variant" id="VAR_077108" description="In EDSPD1; uncertain significance; dbSNP:rs1057519026." evidence="17">
    <original>G</original>
    <variation>D</variation>
    <location>
        <position position="297"/>
    </location>
</feature>
<feature type="sequence variant" id="VAR_077109" description="In EDSPD1; uncertain significance; dbSNP:rs1057515579." evidence="17">
    <original>L</original>
    <variation>P</variation>
    <location>
        <position position="300"/>
    </location>
</feature>
<feature type="sequence variant" id="VAR_077110" description="In EDSPD1; uncertain significance; dbSNP:rs760277934." evidence="17">
    <original>R</original>
    <variation>P</variation>
    <location>
        <position position="301"/>
    </location>
</feature>
<feature type="sequence variant" id="VAR_077111" description="In EDSPD1; dbSNP:rs1057519576." evidence="17">
    <original>Y</original>
    <variation>C</variation>
    <location>
        <position position="302"/>
    </location>
</feature>
<feature type="sequence variant" id="VAR_077112" description="In EDSPD1." evidence="17">
    <original>IIKC</original>
    <variation>RR</variation>
    <location>
        <begin position="306"/>
        <end position="309"/>
    </location>
</feature>
<feature type="sequence variant" id="VAR_077113" description="In EDSPD1; the mutant is not secreted but retained intracellularly; dbSNP:rs769707492." evidence="17">
    <original>C</original>
    <variation>W</variation>
    <location>
        <position position="309"/>
    </location>
</feature>
<feature type="sequence variant" id="VAR_077114" description="In EDSPD1; dbSNP:rs1057519577." evidence="17">
    <original>C</original>
    <variation>R</variation>
    <location>
        <position position="338"/>
    </location>
</feature>
<feature type="sequence variant" id="VAR_077115" description="In EDSPD1; dbSNP:rs1057518645." evidence="17">
    <original>C</original>
    <variation>F</variation>
    <location>
        <position position="358"/>
    </location>
</feature>
<feature type="sequence variant" id="VAR_077116" description="In EDSPD1; uncertain significance; dbSNP:rs1057519578." evidence="17">
    <original>W</original>
    <variation>C</variation>
    <location>
        <position position="364"/>
    </location>
</feature>
<feature type="sequence variant" id="VAR_077117" description="In EDSPD1; the mutant is not secreted but retained intracellularly; dbSNP:rs1057519579." evidence="17">
    <original>C</original>
    <variation>W</variation>
    <location>
        <position position="371"/>
    </location>
</feature>
<feature type="sequence variant" id="VAR_077118" description="In EDSPD1; uncertain significance." evidence="17">
    <original>RIQYY</original>
    <variation>HVI</variation>
    <location>
        <begin position="401"/>
        <end position="405"/>
    </location>
</feature>
<feature type="sequence variant" id="VAR_077119" description="In EDSPD1; uncertain significance; dbSNP:rs1060499554." evidence="17">
    <original>W</original>
    <variation>R</variation>
    <location>
        <position position="435"/>
    </location>
</feature>
<feature type="mutagenesis site" description="Abolished association with the C1Q subcomplex." evidence="14">
    <original>E</original>
    <variation>A</variation>
    <location>
        <position position="66"/>
    </location>
</feature>
<feature type="mutagenesis site" description="Abolished association with the C1Q subcomplex." evidence="14">
    <original>Y</original>
    <variation>A</variation>
    <location>
        <position position="73"/>
    </location>
</feature>
<feature type="mutagenesis site" description="Does not affect association with the C1Q subcomplex." evidence="14">
    <original>D</original>
    <variation>N</variation>
    <location>
        <position position="81"/>
    </location>
</feature>
<feature type="mutagenesis site" description="Does not affect association with the C1Q subcomplex." evidence="14">
    <original>D</original>
    <variation>N</variation>
    <location>
        <position position="144"/>
    </location>
</feature>
<feature type="mutagenesis site" description="Does not affect association with the C1Q subcomplex." evidence="14">
    <original>E</original>
    <variation>A</variation>
    <location>
        <position position="154"/>
    </location>
</feature>
<feature type="mutagenesis site" description="Does not affect association with the C1Q subcomplex." evidence="14">
    <original>E</original>
    <variation>A</variation>
    <location>
        <position position="155"/>
    </location>
</feature>
<feature type="mutagenesis site" description="Does not affect association with the C1Q subcomplex." evidence="14">
    <original>D</original>
    <variation>A</variation>
    <location>
        <position position="156"/>
    </location>
</feature>
<feature type="mutagenesis site" description="Decreased association with the C1Q subcomplex." evidence="14">
    <original>D</original>
    <variation>A</variation>
    <location>
        <position position="290"/>
    </location>
</feature>
<feature type="mutagenesis site" description="Abolished autoprocessing, but promotes extrinsic cleavage by thermolysin." evidence="5 6">
    <original>R</original>
    <variation>Q</variation>
    <location>
        <position position="463"/>
    </location>
</feature>
<feature type="mutagenesis site" description="Abolished protease activity." evidence="5 6 14">
    <original>S</original>
    <variation>A</variation>
    <location>
        <position position="654"/>
    </location>
</feature>
<feature type="turn" evidence="52">
    <location>
        <begin position="145"/>
        <end position="147"/>
    </location>
</feature>
<feature type="turn" evidence="52">
    <location>
        <begin position="150"/>
        <end position="152"/>
    </location>
</feature>
<feature type="strand" evidence="52">
    <location>
        <begin position="156"/>
        <end position="158"/>
    </location>
</feature>
<feature type="strand" evidence="52">
    <location>
        <begin position="162"/>
        <end position="168"/>
    </location>
</feature>
<feature type="strand" evidence="52">
    <location>
        <begin position="171"/>
        <end position="175"/>
    </location>
</feature>
<feature type="strand" evidence="57">
    <location>
        <begin position="196"/>
        <end position="198"/>
    </location>
</feature>
<feature type="strand" evidence="57">
    <location>
        <begin position="200"/>
        <end position="206"/>
    </location>
</feature>
<feature type="turn" evidence="57">
    <location>
        <begin position="208"/>
        <end position="211"/>
    </location>
</feature>
<feature type="strand" evidence="57">
    <location>
        <begin position="219"/>
        <end position="225"/>
    </location>
</feature>
<feature type="strand" evidence="57">
    <location>
        <begin position="230"/>
        <end position="236"/>
    </location>
</feature>
<feature type="strand" evidence="57">
    <location>
        <begin position="246"/>
        <end position="250"/>
    </location>
</feature>
<feature type="strand" evidence="57">
    <location>
        <begin position="254"/>
        <end position="259"/>
    </location>
</feature>
<feature type="strand" evidence="57">
    <location>
        <begin position="262"/>
        <end position="267"/>
    </location>
</feature>
<feature type="strand" evidence="57">
    <location>
        <begin position="269"/>
        <end position="271"/>
    </location>
</feature>
<feature type="strand" evidence="57">
    <location>
        <begin position="281"/>
        <end position="288"/>
    </location>
</feature>
<feature type="strand" evidence="57">
    <location>
        <begin position="299"/>
        <end position="306"/>
    </location>
</feature>
<feature type="strand" evidence="56">
    <location>
        <begin position="319"/>
        <end position="322"/>
    </location>
</feature>
<feature type="strand" evidence="53">
    <location>
        <begin position="326"/>
        <end position="328"/>
    </location>
</feature>
<feature type="strand" evidence="56">
    <location>
        <begin position="333"/>
        <end position="338"/>
    </location>
</feature>
<feature type="strand" evidence="56">
    <location>
        <begin position="342"/>
        <end position="346"/>
    </location>
</feature>
<feature type="strand" evidence="56">
    <location>
        <begin position="349"/>
        <end position="352"/>
    </location>
</feature>
<feature type="strand" evidence="56">
    <location>
        <begin position="355"/>
        <end position="358"/>
    </location>
</feature>
<feature type="strand" evidence="56">
    <location>
        <begin position="364"/>
        <end position="366"/>
    </location>
</feature>
<feature type="strand" evidence="56">
    <location>
        <begin position="370"/>
        <end position="373"/>
    </location>
</feature>
<feature type="strand" evidence="56">
    <location>
        <begin position="385"/>
        <end position="392"/>
    </location>
</feature>
<feature type="strand" evidence="56">
    <location>
        <begin position="401"/>
        <end position="406"/>
    </location>
</feature>
<feature type="turn" evidence="56">
    <location>
        <begin position="408"/>
        <end position="410"/>
    </location>
</feature>
<feature type="strand" evidence="56">
    <location>
        <begin position="411"/>
        <end position="413"/>
    </location>
</feature>
<feature type="strand" evidence="56">
    <location>
        <begin position="426"/>
        <end position="429"/>
    </location>
</feature>
<feature type="strand" evidence="56">
    <location>
        <begin position="433"/>
        <end position="437"/>
    </location>
</feature>
<feature type="turn" evidence="56">
    <location>
        <begin position="438"/>
        <end position="440"/>
    </location>
</feature>
<feature type="strand" evidence="56">
    <location>
        <begin position="447"/>
        <end position="449"/>
    </location>
</feature>
<feature type="strand" evidence="56">
    <location>
        <begin position="478"/>
        <end position="492"/>
    </location>
</feature>
<feature type="turn" evidence="56">
    <location>
        <begin position="493"/>
        <end position="495"/>
    </location>
</feature>
<feature type="strand" evidence="56">
    <location>
        <begin position="496"/>
        <end position="499"/>
    </location>
</feature>
<feature type="helix" evidence="56">
    <location>
        <begin position="501"/>
        <end position="504"/>
    </location>
</feature>
<feature type="strand" evidence="56">
    <location>
        <begin position="518"/>
        <end position="522"/>
    </location>
</feature>
<feature type="helix" evidence="56">
    <location>
        <begin position="526"/>
        <end position="532"/>
    </location>
</feature>
<feature type="strand" evidence="56">
    <location>
        <begin position="537"/>
        <end position="542"/>
    </location>
</feature>
<feature type="strand" evidence="53">
    <location>
        <begin position="548"/>
        <end position="552"/>
    </location>
</feature>
<feature type="strand" evidence="56">
    <location>
        <begin position="559"/>
        <end position="565"/>
    </location>
</feature>
<feature type="strand" evidence="54">
    <location>
        <begin position="571"/>
        <end position="573"/>
    </location>
</feature>
<feature type="helix" evidence="56">
    <location>
        <begin position="582"/>
        <end position="585"/>
    </location>
</feature>
<feature type="strand" evidence="56">
    <location>
        <begin position="590"/>
        <end position="595"/>
    </location>
</feature>
<feature type="strand" evidence="56">
    <location>
        <begin position="600"/>
        <end position="602"/>
    </location>
</feature>
<feature type="strand" evidence="56">
    <location>
        <begin position="608"/>
        <end position="614"/>
    </location>
</feature>
<feature type="helix" evidence="56">
    <location>
        <begin position="617"/>
        <end position="626"/>
    </location>
</feature>
<feature type="strand" evidence="56">
    <location>
        <begin position="637"/>
        <end position="641"/>
    </location>
</feature>
<feature type="helix" evidence="53">
    <location>
        <begin position="643"/>
        <end position="650"/>
    </location>
</feature>
<feature type="turn" evidence="55">
    <location>
        <begin position="651"/>
        <end position="655"/>
    </location>
</feature>
<feature type="strand" evidence="56">
    <location>
        <begin position="657"/>
        <end position="661"/>
    </location>
</feature>
<feature type="turn" evidence="56">
    <location>
        <begin position="663"/>
        <end position="665"/>
    </location>
</feature>
<feature type="strand" evidence="56">
    <location>
        <begin position="668"/>
        <end position="676"/>
    </location>
</feature>
<feature type="strand" evidence="56">
    <location>
        <begin position="678"/>
        <end position="683"/>
    </location>
</feature>
<feature type="strand" evidence="56">
    <location>
        <begin position="685"/>
        <end position="689"/>
    </location>
</feature>
<feature type="helix" evidence="56">
    <location>
        <begin position="690"/>
        <end position="693"/>
    </location>
</feature>
<feature type="helix" evidence="56">
    <location>
        <begin position="694"/>
        <end position="700"/>
    </location>
</feature>
<organism>
    <name type="scientific">Homo sapiens</name>
    <name type="common">Human</name>
    <dbReference type="NCBI Taxonomy" id="9606"/>
    <lineage>
        <taxon>Eukaryota</taxon>
        <taxon>Metazoa</taxon>
        <taxon>Chordata</taxon>
        <taxon>Craniata</taxon>
        <taxon>Vertebrata</taxon>
        <taxon>Euteleostomi</taxon>
        <taxon>Mammalia</taxon>
        <taxon>Eutheria</taxon>
        <taxon>Euarchontoglires</taxon>
        <taxon>Primates</taxon>
        <taxon>Haplorrhini</taxon>
        <taxon>Catarrhini</taxon>
        <taxon>Hominidae</taxon>
        <taxon>Homo</taxon>
    </lineage>
</organism>
<accession>P00736</accession>
<accession>A6NJQ8</accession>
<accession>Q68D77</accession>
<accession>Q8J012</accession>
<reference key="1">
    <citation type="journal article" date="1986" name="Biochemistry">
        <title>Nucleotide sequence of the cDNA coding for human complement C1r.</title>
        <authorList>
            <person name="Leytus S.P."/>
            <person name="Kurachi K."/>
            <person name="Sakariassen K.S."/>
            <person name="Davie E.W."/>
        </authorList>
    </citation>
    <scope>NUCLEOTIDE SEQUENCE [MRNA]</scope>
    <scope>VARIANT ARG-186</scope>
</reference>
<reference key="2">
    <citation type="journal article" date="1986" name="Biochem. J.">
        <title>Cloning and sequencing of full-length cDNA encoding the precursor of human complement component C1r.</title>
        <authorList>
            <person name="Journet A."/>
            <person name="Tosi M."/>
        </authorList>
    </citation>
    <scope>NUCLEOTIDE SEQUENCE [MRNA]</scope>
    <scope>VARIANTS LEU-152 AND ARG-186</scope>
</reference>
<reference key="3">
    <citation type="journal article" date="2003" name="Ann. Hum. Genet.">
        <title>The human complement component C1R gene: the exon-intron structure and the molecular basis of allelic diversity.</title>
        <authorList>
            <person name="Nakagawa M."/>
            <person name="Yuasa I."/>
            <person name="Irizawa Y."/>
            <person name="Umetsu K."/>
        </authorList>
    </citation>
    <scope>NUCLEOTIDE SEQUENCE [GENOMIC DNA]</scope>
    <scope>VARIANTS HIS-131; LEU-152; TYR-163; LYS-184; ARG-186 AND ARG-261</scope>
</reference>
<reference key="4">
    <citation type="journal article" date="2007" name="BMC Genomics">
        <title>The full-ORF clone resource of the German cDNA consortium.</title>
        <authorList>
            <person name="Bechtel S."/>
            <person name="Rosenfelder H."/>
            <person name="Duda A."/>
            <person name="Schmidt C.P."/>
            <person name="Ernst U."/>
            <person name="Wellenreuther R."/>
            <person name="Mehrle A."/>
            <person name="Schuster C."/>
            <person name="Bahr A."/>
            <person name="Bloecker H."/>
            <person name="Heubner D."/>
            <person name="Hoerlein A."/>
            <person name="Michel G."/>
            <person name="Wedler H."/>
            <person name="Koehrer K."/>
            <person name="Ottenwaelder B."/>
            <person name="Poustka A."/>
            <person name="Wiemann S."/>
            <person name="Schupp I."/>
        </authorList>
    </citation>
    <scope>NUCLEOTIDE SEQUENCE [LARGE SCALE MRNA]</scope>
    <source>
        <tissue>Colon endothelium</tissue>
    </source>
</reference>
<reference key="5">
    <citation type="journal article" date="2006" name="Nature">
        <title>The finished DNA sequence of human chromosome 12.</title>
        <authorList>
            <person name="Scherer S.E."/>
            <person name="Muzny D.M."/>
            <person name="Buhay C.J."/>
            <person name="Chen R."/>
            <person name="Cree A."/>
            <person name="Ding Y."/>
            <person name="Dugan-Rocha S."/>
            <person name="Gill R."/>
            <person name="Gunaratne P."/>
            <person name="Harris R.A."/>
            <person name="Hawes A.C."/>
            <person name="Hernandez J."/>
            <person name="Hodgson A.V."/>
            <person name="Hume J."/>
            <person name="Jackson A."/>
            <person name="Khan Z.M."/>
            <person name="Kovar-Smith C."/>
            <person name="Lewis L.R."/>
            <person name="Lozado R.J."/>
            <person name="Metzker M.L."/>
            <person name="Milosavljevic A."/>
            <person name="Miner G.R."/>
            <person name="Montgomery K.T."/>
            <person name="Morgan M.B."/>
            <person name="Nazareth L.V."/>
            <person name="Scott G."/>
            <person name="Sodergren E."/>
            <person name="Song X.-Z."/>
            <person name="Steffen D."/>
            <person name="Lovering R.C."/>
            <person name="Wheeler D.A."/>
            <person name="Worley K.C."/>
            <person name="Yuan Y."/>
            <person name="Zhang Z."/>
            <person name="Adams C.Q."/>
            <person name="Ansari-Lari M.A."/>
            <person name="Ayele M."/>
            <person name="Brown M.J."/>
            <person name="Chen G."/>
            <person name="Chen Z."/>
            <person name="Clerc-Blankenburg K.P."/>
            <person name="Davis C."/>
            <person name="Delgado O."/>
            <person name="Dinh H.H."/>
            <person name="Draper H."/>
            <person name="Gonzalez-Garay M.L."/>
            <person name="Havlak P."/>
            <person name="Jackson L.R."/>
            <person name="Jacob L.S."/>
            <person name="Kelly S.H."/>
            <person name="Li L."/>
            <person name="Li Z."/>
            <person name="Liu J."/>
            <person name="Liu W."/>
            <person name="Lu J."/>
            <person name="Maheshwari M."/>
            <person name="Nguyen B.-V."/>
            <person name="Okwuonu G.O."/>
            <person name="Pasternak S."/>
            <person name="Perez L.M."/>
            <person name="Plopper F.J.H."/>
            <person name="Santibanez J."/>
            <person name="Shen H."/>
            <person name="Tabor P.E."/>
            <person name="Verduzco D."/>
            <person name="Waldron L."/>
            <person name="Wang Q."/>
            <person name="Williams G.A."/>
            <person name="Zhang J."/>
            <person name="Zhou J."/>
            <person name="Allen C.C."/>
            <person name="Amin A.G."/>
            <person name="Anyalebechi V."/>
            <person name="Bailey M."/>
            <person name="Barbaria J.A."/>
            <person name="Bimage K.E."/>
            <person name="Bryant N.P."/>
            <person name="Burch P.E."/>
            <person name="Burkett C.E."/>
            <person name="Burrell K.L."/>
            <person name="Calderon E."/>
            <person name="Cardenas V."/>
            <person name="Carter K."/>
            <person name="Casias K."/>
            <person name="Cavazos I."/>
            <person name="Cavazos S.R."/>
            <person name="Ceasar H."/>
            <person name="Chacko J."/>
            <person name="Chan S.N."/>
            <person name="Chavez D."/>
            <person name="Christopoulos C."/>
            <person name="Chu J."/>
            <person name="Cockrell R."/>
            <person name="Cox C.D."/>
            <person name="Dang M."/>
            <person name="Dathorne S.R."/>
            <person name="David R."/>
            <person name="Davis C.M."/>
            <person name="Davy-Carroll L."/>
            <person name="Deshazo D.R."/>
            <person name="Donlin J.E."/>
            <person name="D'Souza L."/>
            <person name="Eaves K.A."/>
            <person name="Egan A."/>
            <person name="Emery-Cohen A.J."/>
            <person name="Escotto M."/>
            <person name="Flagg N."/>
            <person name="Forbes L.D."/>
            <person name="Gabisi A.M."/>
            <person name="Garza M."/>
            <person name="Hamilton C."/>
            <person name="Henderson N."/>
            <person name="Hernandez O."/>
            <person name="Hines S."/>
            <person name="Hogues M.E."/>
            <person name="Huang M."/>
            <person name="Idlebird D.G."/>
            <person name="Johnson R."/>
            <person name="Jolivet A."/>
            <person name="Jones S."/>
            <person name="Kagan R."/>
            <person name="King L.M."/>
            <person name="Leal B."/>
            <person name="Lebow H."/>
            <person name="Lee S."/>
            <person name="LeVan J.M."/>
            <person name="Lewis L.C."/>
            <person name="London P."/>
            <person name="Lorensuhewa L.M."/>
            <person name="Loulseged H."/>
            <person name="Lovett D.A."/>
            <person name="Lucier A."/>
            <person name="Lucier R.L."/>
            <person name="Ma J."/>
            <person name="Madu R.C."/>
            <person name="Mapua P."/>
            <person name="Martindale A.D."/>
            <person name="Martinez E."/>
            <person name="Massey E."/>
            <person name="Mawhiney S."/>
            <person name="Meador M.G."/>
            <person name="Mendez S."/>
            <person name="Mercado C."/>
            <person name="Mercado I.C."/>
            <person name="Merritt C.E."/>
            <person name="Miner Z.L."/>
            <person name="Minja E."/>
            <person name="Mitchell T."/>
            <person name="Mohabbat F."/>
            <person name="Mohabbat K."/>
            <person name="Montgomery B."/>
            <person name="Moore N."/>
            <person name="Morris S."/>
            <person name="Munidasa M."/>
            <person name="Ngo R.N."/>
            <person name="Nguyen N.B."/>
            <person name="Nickerson E."/>
            <person name="Nwaokelemeh O.O."/>
            <person name="Nwokenkwo S."/>
            <person name="Obregon M."/>
            <person name="Oguh M."/>
            <person name="Oragunye N."/>
            <person name="Oviedo R.J."/>
            <person name="Parish B.J."/>
            <person name="Parker D.N."/>
            <person name="Parrish J."/>
            <person name="Parks K.L."/>
            <person name="Paul H.A."/>
            <person name="Payton B.A."/>
            <person name="Perez A."/>
            <person name="Perrin W."/>
            <person name="Pickens A."/>
            <person name="Primus E.L."/>
            <person name="Pu L.-L."/>
            <person name="Puazo M."/>
            <person name="Quiles M.M."/>
            <person name="Quiroz J.B."/>
            <person name="Rabata D."/>
            <person name="Reeves K."/>
            <person name="Ruiz S.J."/>
            <person name="Shao H."/>
            <person name="Sisson I."/>
            <person name="Sonaike T."/>
            <person name="Sorelle R.P."/>
            <person name="Sutton A.E."/>
            <person name="Svatek A.F."/>
            <person name="Svetz L.A."/>
            <person name="Tamerisa K.S."/>
            <person name="Taylor T.R."/>
            <person name="Teague B."/>
            <person name="Thomas N."/>
            <person name="Thorn R.D."/>
            <person name="Trejos Z.Y."/>
            <person name="Trevino B.K."/>
            <person name="Ukegbu O.N."/>
            <person name="Urban J.B."/>
            <person name="Vasquez L.I."/>
            <person name="Vera V.A."/>
            <person name="Villasana D.M."/>
            <person name="Wang L."/>
            <person name="Ward-Moore S."/>
            <person name="Warren J.T."/>
            <person name="Wei X."/>
            <person name="White F."/>
            <person name="Williamson A.L."/>
            <person name="Wleczyk R."/>
            <person name="Wooden H.S."/>
            <person name="Wooden S.H."/>
            <person name="Yen J."/>
            <person name="Yoon L."/>
            <person name="Yoon V."/>
            <person name="Zorrilla S.E."/>
            <person name="Nelson D."/>
            <person name="Kucherlapati R."/>
            <person name="Weinstock G."/>
            <person name="Gibbs R.A."/>
        </authorList>
    </citation>
    <scope>NUCLEOTIDE SEQUENCE [LARGE SCALE GENOMIC DNA]</scope>
</reference>
<reference key="6">
    <citation type="journal article" date="2004" name="Genome Res.">
        <title>The status, quality, and expansion of the NIH full-length cDNA project: the Mammalian Gene Collection (MGC).</title>
        <authorList>
            <consortium name="The MGC Project Team"/>
        </authorList>
    </citation>
    <scope>NUCLEOTIDE SEQUENCE [LARGE SCALE MRNA]</scope>
    <scope>VARIANTS LEU-152 AND ARG-186</scope>
    <source>
        <tissue>Skin</tissue>
    </source>
</reference>
<reference key="7">
    <citation type="journal article" date="1987" name="Biochem. J.">
        <title>Complete amino acid sequence of the A chain of human complement-classical-pathway enzyme C1r.</title>
        <authorList>
            <person name="Arlaud G.J."/>
            <person name="Willis A.C."/>
            <person name="Gagnon J."/>
        </authorList>
    </citation>
    <scope>PROTEIN SEQUENCE OF 18-463</scope>
</reference>
<reference key="8">
    <citation type="journal article" date="1983" name="Biochemistry">
        <title>Complete amino acid sequence of the catalytic chain of human complement subcomponent C1-r.</title>
        <authorList>
            <person name="Arlaud G.J."/>
            <person name="Gagnon J."/>
        </authorList>
    </citation>
    <scope>PROTEIN SEQUENCE OF 464-705</scope>
</reference>
<reference key="9">
    <citation type="journal article" date="1987" name="FEBS Lett.">
        <title>Identification of erythro-beta-hydroxyasparagine in the EGF-like domain of human C1r.</title>
        <authorList>
            <person name="Arlaud G.J."/>
            <person name="van Dorsselaer A."/>
            <person name="Bell A."/>
            <person name="Mancini M."/>
            <person name="Aude C."/>
            <person name="Gagnon J."/>
        </authorList>
    </citation>
    <scope>PROTEIN SEQUENCE OF 152-186</scope>
    <scope>HYDROXYLATION AT ASN-167</scope>
</reference>
<reference key="10">
    <citation type="journal article" date="1996" name="FEBS Lett.">
        <title>Identification of a cryptic protein kinase CK2 phosphorylation site in human complement protease Clr, and its use to probe intramolecular interaction.</title>
        <authorList>
            <person name="Pelloux S."/>
            <person name="Thielens N.M."/>
            <person name="Hudry-Clergeon G."/>
            <person name="Petillot Y."/>
            <person name="Filhol O."/>
            <person name="Arlaud G.J."/>
        </authorList>
    </citation>
    <scope>PROTEIN SEQUENCE OF 133-137; 187-211 AND 609-613</scope>
    <scope>PHOSPHORYLATION AT SER-206 BY CK2</scope>
</reference>
<reference key="11">
    <citation type="journal article" date="1977" name="Biochem. J.">
        <title>The structure and enzymic activities of the C1r and C1s subcomponents of C1, the first component of human serum complement.</title>
        <authorList>
            <person name="Sim R.B."/>
            <person name="Porter R.R."/>
            <person name="Reid K.B."/>
            <person name="Gigli I."/>
        </authorList>
    </citation>
    <scope>PROTEIN SEQUENCE OF 463-482</scope>
    <scope>PROTEOLYTIC CLEAVAGE</scope>
</reference>
<reference key="12">
    <citation type="journal article" date="1980" name="Biochim. Biophys. Acta">
        <title>Purified proenzyme C1r. Some characteristics of its activation and subsequent proteolytic cleavage.</title>
        <authorList>
            <person name="Arlaud G.J."/>
            <person name="Villiers C.L."/>
            <person name="Chesne S."/>
            <person name="Colomb M.G."/>
        </authorList>
    </citation>
    <scope>FUNCTION</scope>
    <scope>ACTIVITY REGULATION</scope>
    <scope>PROTEOLYTIC CLEAVAGE</scope>
</reference>
<reference key="13">
    <citation type="journal article" date="1981" name="J. Biol. Chem.">
        <title>Mapping the substrate binding site of human C1r and C1s with peptide thioesters. Development of new sensitive substrates.</title>
        <authorList>
            <person name="McRae B.J."/>
            <person name="Lin T.Y."/>
            <person name="Powers J.C."/>
        </authorList>
    </citation>
    <scope>FUNCTION</scope>
    <scope>CATALYTIC ACTIVITY</scope>
</reference>
<reference key="14">
    <citation type="journal article" date="1982" name="Proc. Natl. Acad. Sci. U.S.A.">
        <title>Ultrastructure of the first component of human complement: electron microscopy of the crosslinked complex.</title>
        <authorList>
            <person name="Strang C.J."/>
            <person name="Siegel R.C."/>
            <person name="Phillips M.L."/>
            <person name="Poon P.H."/>
            <person name="Schumaker V.N."/>
        </authorList>
    </citation>
    <scope>SUBUNIT</scope>
</reference>
<reference key="15">
    <citation type="journal article" date="1985" name="Biochem. J.">
        <title>Molecular modelling of human complement subcomponent C1q and its complex with C1r2C1s2 derived from neutron-scattering curves and hydrodynamic properties.</title>
        <authorList>
            <person name="Perkins S.J."/>
        </authorList>
    </citation>
    <scope>SUBUNIT</scope>
</reference>
<reference key="16">
    <citation type="journal article" date="1985" name="Proc. Natl. Acad. Sci. U.S.A.">
        <title>Domain structure and associated functions of subcomponents C1r and C1s of the first component of human complement.</title>
        <authorList>
            <person name="Villiers C.L."/>
            <person name="Arlaud G.J."/>
            <person name="Colomb M.G."/>
        </authorList>
    </citation>
    <scope>SUBUNIT</scope>
</reference>
<reference key="17">
    <citation type="journal article" date="1987" name="Biochemistry">
        <title>Complete cDNA sequence of human complement Cls and close physical linkage of the homologous genes Cls and Clr.</title>
        <authorList>
            <person name="Tosi M."/>
            <person name="Duponchel C."/>
            <person name="Meo T."/>
            <person name="Julier C."/>
        </authorList>
    </citation>
    <scope>POSSIBLE INVOLVEMENT IN C1R DEFICIENCY</scope>
</reference>
<reference key="18">
    <citation type="journal article" date="2001" name="J. Biol. Chem.">
        <title>Assembly and enzymatic properties of the catalytic domain of human complement protease C1r.</title>
        <authorList>
            <person name="Lacroix M."/>
            <person name="Ebel C."/>
            <person name="Kardos J."/>
            <person name="Dobo J."/>
            <person name="Gal P."/>
            <person name="Zavodszky P."/>
            <person name="Arlaud G.J."/>
            <person name="Thielens N.M."/>
        </authorList>
    </citation>
    <scope>FUNCTION</scope>
    <scope>CATALYTIC ACTIVITY</scope>
    <scope>ACTIVE SITE</scope>
    <scope>PROTEOLYTIC CLEAVAGE</scope>
    <scope>MUTAGENESIS OF ARG-463 AND SER-654</scope>
</reference>
<reference key="19">
    <citation type="journal article" date="2001" name="J. Immunol.">
        <title>The role of the individual domains in the structure and function of the catalytic region of a modular serine protease, C1r.</title>
        <authorList>
            <person name="Kardos J."/>
            <person name="Gal P."/>
            <person name="Szilagyi L."/>
            <person name="Thielens N.M."/>
            <person name="Szilagyi K."/>
            <person name="Lorincz Z."/>
            <person name="Kulcsar P."/>
            <person name="Graf L."/>
            <person name="Arlaud G.J."/>
            <person name="Zavodszky P."/>
        </authorList>
    </citation>
    <scope>FUNCTION</scope>
    <scope>CATALYTIC ACTIVITY</scope>
    <scope>ACTIVE SITE</scope>
    <scope>PROTEOLYTIC CLEAVAGE</scope>
    <scope>MUTAGENESIS OF ARG-463 AND SER-654</scope>
</reference>
<reference key="20">
    <citation type="journal article" date="2005" name="J. Proteome Res.">
        <title>Human plasma N-glycoproteome analysis by immunoaffinity subtraction, hydrazide chemistry, and mass spectrometry.</title>
        <authorList>
            <person name="Liu T."/>
            <person name="Qian W.-J."/>
            <person name="Gritsenko M.A."/>
            <person name="Camp D.G. II"/>
            <person name="Monroe M.E."/>
            <person name="Moore R.J."/>
            <person name="Smith R.D."/>
        </authorList>
    </citation>
    <scope>GLYCOSYLATION [LARGE SCALE ANALYSIS] AT ASN-125; ASN-221 AND ASN-514</scope>
    <source>
        <tissue>Plasma</tissue>
    </source>
</reference>
<reference key="21">
    <citation type="journal article" date="2009" name="J. Biol. Chem.">
        <title>Identification of the C1q-binding Sites of Human C1r and C1s: a refined three-dimensional model of the C1 complex of complement.</title>
        <authorList>
            <person name="Bally I."/>
            <person name="Rossi V."/>
            <person name="Lunardi T."/>
            <person name="Thielens N.M."/>
            <person name="Gaboriaud C."/>
            <person name="Arlaud G.J."/>
        </authorList>
    </citation>
    <scope>FUNCTION</scope>
    <scope>ACTIVE SITE</scope>
    <scope>SUBUNIT</scope>
    <scope>MUTAGENESIS OF GLU-66; TYR-73; ASP-81; ASP-144; GLU-154; GLU-155; ASP-156; ASP-290 AND SER-654</scope>
</reference>
<reference key="22">
    <citation type="journal article" date="2009" name="J. Proteome Res.">
        <title>Glycoproteomics analysis of human liver tissue by combination of multiple enzyme digestion and hydrazide chemistry.</title>
        <authorList>
            <person name="Chen R."/>
            <person name="Jiang X."/>
            <person name="Sun D."/>
            <person name="Han G."/>
            <person name="Wang F."/>
            <person name="Ye M."/>
            <person name="Wang L."/>
            <person name="Zou H."/>
        </authorList>
    </citation>
    <scope>GLYCOSYLATION [LARGE SCALE ANALYSIS] AT ASN-514</scope>
    <source>
        <tissue>Liver</tissue>
    </source>
</reference>
<reference key="23">
    <citation type="journal article" date="2010" name="J. Biol. Chem.">
        <title>Calcium-dependent conformational flexibility of a CUB domain controls activation of the complement serine protease C1r.</title>
        <authorList>
            <person name="Major B."/>
            <person name="Kardos J."/>
            <person name="Kekesi K.A."/>
            <person name="Lorincz Z."/>
            <person name="Zavodszky P."/>
            <person name="Gal P."/>
        </authorList>
    </citation>
    <scope>FUNCTION</scope>
    <scope>ACTIVITY REGULATION</scope>
    <scope>DOMAIN</scope>
    <scope>PROTEOLYTIC CLEAVAGE</scope>
</reference>
<reference key="24">
    <citation type="journal article" date="2014" name="J. Proteomics">
        <title>An enzyme assisted RP-RPLC approach for in-depth analysis of human liver phosphoproteome.</title>
        <authorList>
            <person name="Bian Y."/>
            <person name="Song C."/>
            <person name="Cheng K."/>
            <person name="Dong M."/>
            <person name="Wang F."/>
            <person name="Huang J."/>
            <person name="Sun D."/>
            <person name="Wang L."/>
            <person name="Ye M."/>
            <person name="Zou H."/>
        </authorList>
    </citation>
    <scope>IDENTIFICATION BY MASS SPECTROMETRY [LARGE SCALE ANALYSIS]</scope>
    <source>
        <tissue>Liver</tissue>
    </source>
</reference>
<reference key="25">
    <citation type="journal article" date="2016" name="Am. J. Hum. Genet.">
        <title>Periodontal Ehlers-Danlos syndrome is caused by mutations in C1R and C1S, which encode subcomponents C1r and C1s of complement.</title>
        <authorList>
            <consortium name="Molecular Basis of Periodontal EDS Consortium"/>
            <person name="Kapferer-Seebacher I."/>
            <person name="Pepin M."/>
            <person name="Werner R."/>
            <person name="Aitman T.J."/>
            <person name="Nordgren A."/>
            <person name="Stoiber H."/>
            <person name="Thielens N."/>
            <person name="Gaboriaud C."/>
            <person name="Amberger A."/>
            <person name="Schossig A."/>
            <person name="Gruber R."/>
            <person name="Giunta C."/>
            <person name="Bamshad M."/>
            <person name="Bjoerck E."/>
            <person name="Chen C."/>
            <person name="Chitayat D."/>
            <person name="Dorschner M."/>
            <person name="Schmitt-Egenolf M."/>
            <person name="Hale C.J."/>
            <person name="Hanna D."/>
            <person name="Hennies H.C."/>
            <person name="Heiss-Kisielewsky I."/>
            <person name="Lindstrand A."/>
            <person name="Lundberg P."/>
            <person name="Mitchell A.L."/>
            <person name="Nickerson D.A."/>
            <person name="Reinstein E."/>
            <person name="Rohrbach M."/>
            <person name="Romani N."/>
            <person name="Schmuth M."/>
            <person name="Silver R."/>
            <person name="Taylan F."/>
            <person name="Vandersteen A."/>
            <person name="Vandrovcova J."/>
            <person name="Weerakkody R."/>
            <person name="Yang M."/>
            <person name="Pope F.M."/>
            <person name="Byers P.H."/>
            <person name="Zschocke J."/>
        </authorList>
    </citation>
    <scope>SUBCELLULAR LOCATION</scope>
    <scope>INVOLVEMENT IN EDSPD1</scope>
    <scope>VARIANTS EDSPD1 ASP-50; GLY-290; ASP-297; PRO-300; PRO-301; CYS-302; 306-ILE--CYS-309 DELINS ARG-ARG; TRP-309; ARG-338; PHE-358; CYS-364; TRP-371; 401-ARG--TYR-405 DELINS HIS-VAL-ILE AND ARG-435</scope>
    <scope>CHARACTERIZATION OF VARIANTS EDSPD1 ASP-50; TRP-309 AND TRP-371</scope>
</reference>
<reference key="26">
    <citation type="journal article" date="2017" name="Proc. Natl. Acad. Sci. U.S.A.">
        <title>Structure and activation of C1, the complex initiating the classical pathway of the complement cascade.</title>
        <authorList>
            <person name="Mortensen S.A."/>
            <person name="Sander B."/>
            <person name="Jensen R.K."/>
            <person name="Pedersen J.S."/>
            <person name="Golas M.M."/>
            <person name="Jensenius J.C."/>
            <person name="Hansen A.G."/>
            <person name="Thiel S."/>
            <person name="Andersen G.R."/>
        </authorList>
    </citation>
    <scope>FUNCTION</scope>
    <scope>SUBUNIT</scope>
</reference>
<reference key="27">
    <citation type="journal article" date="2018" name="Science">
        <title>Structures of C1-IgG1 provide insights into how danger pattern recognition activates complement.</title>
        <authorList>
            <person name="Ugurlar D."/>
            <person name="Howes S.C."/>
            <person name="de Kreuk B.J."/>
            <person name="Koning R.I."/>
            <person name="de Jong R.N."/>
            <person name="Beurskens F.J."/>
            <person name="Schuurman J."/>
            <person name="Koster A.J."/>
            <person name="Sharp T.H."/>
            <person name="Parren P.W.H.I."/>
            <person name="Gros P."/>
        </authorList>
    </citation>
    <scope>FUNCTION</scope>
    <scope>SUBUNIT</scope>
</reference>
<reference key="28">
    <citation type="journal article" date="2021" name="Proc. Natl. Acad. Sci. U.S.A.">
        <title>C1q binding to surface-bound IgG is stabilized by C1r2s2 proteases.</title>
        <authorList>
            <person name="Zwarthoff S.A."/>
            <person name="Widmer K."/>
            <person name="Kuipers A."/>
            <person name="Strasser J."/>
            <person name="Ruyken M."/>
            <person name="Aerts P.C."/>
            <person name="de Haas C.J.C."/>
            <person name="Ugurlar D."/>
            <person name="den Boer M.A."/>
            <person name="Vidarsson G."/>
            <person name="van Strijp J.A.G."/>
            <person name="Gros P."/>
            <person name="Parren P.W.H.I."/>
            <person name="van Kessel K.P.M."/>
            <person name="Preiner J."/>
            <person name="Beurskens F.J."/>
            <person name="Schuurman J."/>
            <person name="Ricklin D."/>
            <person name="Rooijakkers S.H.M."/>
        </authorList>
    </citation>
    <scope>FUNCTION</scope>
    <scope>SUBUNIT</scope>
    <scope>SUBCELLULAR LOCATION</scope>
</reference>
<reference evidence="45" key="29">
    <citation type="journal article" date="1998" name="Biochemistry">
        <title>Solution structure of the epidermal growth factor (EGF)-like module of human complement protease C1r, an atypical member of the EGF family.</title>
        <authorList>
            <person name="Bersch B."/>
            <person name="Hernandez J.-F."/>
            <person name="Marion D."/>
            <person name="Arlaud G.J."/>
        </authorList>
    </citation>
    <scope>STRUCTURE BY NMR OF 140-192</scope>
    <scope>DISULFIDE BONDS</scope>
</reference>
<reference evidence="46" key="30">
    <citation type="journal article" date="2002" name="EMBO J.">
        <title>The crystal structure of the zymogen catalytic domain of complement protease C1r reveals that a disruptive mechanical stress is required to trigger activation of the C1 complex.</title>
        <authorList>
            <person name="Budayova-Spano M."/>
            <person name="Lacroix M."/>
            <person name="Thielens N.M."/>
            <person name="Arlaud G.J."/>
            <person name="Fontecilla-Camps J.-C."/>
            <person name="Gaboriaud C."/>
        </authorList>
    </citation>
    <scope>X-RAY CRYSTALLOGRAPHY (2.9 ANGSTROMS) OF 307-702</scope>
    <scope>GLYCOSYLATION AT ASN-581</scope>
</reference>
<reference key="31">
    <citation type="journal article" date="2002" name="Structure">
        <title>Monomeric structures of the zymogen and active catalytic domain of complement protease c1r: further insights into the c1 activation mechanism.</title>
        <authorList>
            <person name="Budayova-Spano M."/>
            <person name="Grabarse W."/>
            <person name="Thielens N.M."/>
            <person name="Hillen H."/>
            <person name="Lacroix M."/>
            <person name="Schmidt M."/>
            <person name="Fontecilla-Camps J.-C."/>
            <person name="Arlaud G.J."/>
            <person name="Gaboriaud C."/>
        </authorList>
    </citation>
    <scope>X-RAY CRYSTALLOGRAPHY (3.2 ANGSTROMS) OF 375-702</scope>
</reference>
<reference evidence="47" key="32">
    <citation type="journal article" date="2008" name="Mol. Immunol.">
        <title>Revisiting the mechanism of the autoactivation of the complement protease C1r in the C1 complex: structure of the active catalytic region of C1r.</title>
        <authorList>
            <person name="Kardos J."/>
            <person name="Harmat V."/>
            <person name="Pallo A."/>
            <person name="Barabas O."/>
            <person name="Szilagyi K."/>
            <person name="Graf L."/>
            <person name="Naray-Szabo G."/>
            <person name="Goto Y."/>
            <person name="Zavodszky P."/>
            <person name="Gal P."/>
        </authorList>
    </citation>
    <scope>X-RAY CRYSTALLOGRAPHY (2.60 ANGSTROMS) OF 309-463 AND 464-705</scope>
    <scope>FUNCTION</scope>
    <scope>ACTIVITY REGULATION</scope>
    <scope>PROTEOLYTIC CLEAVAGE</scope>
    <scope>DISULFIDE BONDS</scope>
</reference>
<reference evidence="48 49 50 51" key="33">
    <citation type="journal article" date="2018" name="Proc. Natl. Acad. Sci. U.S.A.">
        <title>Structure of the C1r-C1s interaction of the C1 complex of complement activation.</title>
        <authorList>
            <person name="Almitairi J.O.M."/>
            <person name="Venkatraman Girija U."/>
            <person name="Furze C.M."/>
            <person name="Simpson-Gray X."/>
            <person name="Badakshi F."/>
            <person name="Marshall J.E."/>
            <person name="Schwaeble W.J."/>
            <person name="Mitchell D.A."/>
            <person name="Moody P.C.E."/>
            <person name="Wallis R."/>
        </authorList>
    </citation>
    <scope>X-RAY CRYSTALLOGRAPHY (1.95 ANGSTROMS) OF 191-307 IN COMPLEX WITH CA(2+)</scope>
    <scope>FUNCTION</scope>
    <scope>SUBUNIT</scope>
    <scope>DISULFIDE BONDS</scope>
    <scope>GLYCOSYLATION AT ASN-125</scope>
</reference>
<reference key="34">
    <citation type="journal article" date="1994" name="Hum. Mol. Genet.">
        <title>A common amino acid polymorphism in complement component C1R.</title>
        <authorList>
            <person name="Nothen M.M."/>
            <person name="Dewald G."/>
        </authorList>
    </citation>
    <scope>VARIANT LEU-152</scope>
</reference>
<reference key="35">
    <citation type="journal article" date="2011" name="J. Mol. Cell Biol.">
        <title>Quantitative detection of single amino acid polymorphisms by targeted proteomics.</title>
        <authorList>
            <person name="Su Z.D."/>
            <person name="Sun L."/>
            <person name="Yu D.X."/>
            <person name="Li R.X."/>
            <person name="Li H.X."/>
            <person name="Yu Z.J."/>
            <person name="Sheng Q.H."/>
            <person name="Lin X."/>
            <person name="Zeng R."/>
            <person name="Wu J.R."/>
        </authorList>
    </citation>
    <scope>VARIANTS LYS-184 AND ARG-261</scope>
    <scope>IDENTIFICATION BY MASS SPECTROMETRY</scope>
</reference>
<proteinExistence type="evidence at protein level"/>
<evidence type="ECO:0000255" key="1"/>
<evidence type="ECO:0000255" key="2">
    <source>
        <dbReference type="PROSITE-ProRule" id="PRU00059"/>
    </source>
</evidence>
<evidence type="ECO:0000255" key="3">
    <source>
        <dbReference type="PROSITE-ProRule" id="PRU00274"/>
    </source>
</evidence>
<evidence type="ECO:0000255" key="4">
    <source>
        <dbReference type="PROSITE-ProRule" id="PRU00302"/>
    </source>
</evidence>
<evidence type="ECO:0000269" key="5">
    <source>
    </source>
</evidence>
<evidence type="ECO:0000269" key="6">
    <source>
    </source>
</evidence>
<evidence type="ECO:0000269" key="7">
    <source>
    </source>
</evidence>
<evidence type="ECO:0000269" key="8">
    <source>
    </source>
</evidence>
<evidence type="ECO:0000269" key="9">
    <source>
    </source>
</evidence>
<evidence type="ECO:0000269" key="10">
    <source>
    </source>
</evidence>
<evidence type="ECO:0000269" key="11">
    <source>
    </source>
</evidence>
<evidence type="ECO:0000269" key="12">
    <source>
    </source>
</evidence>
<evidence type="ECO:0000269" key="13">
    <source>
    </source>
</evidence>
<evidence type="ECO:0000269" key="14">
    <source>
    </source>
</evidence>
<evidence type="ECO:0000269" key="15">
    <source>
    </source>
</evidence>
<evidence type="ECO:0000269" key="16">
    <source>
    </source>
</evidence>
<evidence type="ECO:0000269" key="17">
    <source>
    </source>
</evidence>
<evidence type="ECO:0000269" key="18">
    <source>
    </source>
</evidence>
<evidence type="ECO:0000269" key="19">
    <source>
    </source>
</evidence>
<evidence type="ECO:0000269" key="20">
    <source>
    </source>
</evidence>
<evidence type="ECO:0000269" key="21">
    <source>
    </source>
</evidence>
<evidence type="ECO:0000269" key="22">
    <source>
    </source>
</evidence>
<evidence type="ECO:0000269" key="23">
    <source>
    </source>
</evidence>
<evidence type="ECO:0000269" key="24">
    <source>
    </source>
</evidence>
<evidence type="ECO:0000269" key="25">
    <source>
    </source>
</evidence>
<evidence type="ECO:0000269" key="26">
    <source>
    </source>
</evidence>
<evidence type="ECO:0000269" key="27">
    <source>
    </source>
</evidence>
<evidence type="ECO:0000269" key="28">
    <source>
    </source>
</evidence>
<evidence type="ECO:0000269" key="29">
    <source>
    </source>
</evidence>
<evidence type="ECO:0000269" key="30">
    <source>
    </source>
</evidence>
<evidence type="ECO:0000269" key="31">
    <source>
    </source>
</evidence>
<evidence type="ECO:0000269" key="32">
    <source>
    </source>
</evidence>
<evidence type="ECO:0000269" key="33">
    <source>
    </source>
</evidence>
<evidence type="ECO:0000269" key="34">
    <source>
    </source>
</evidence>
<evidence type="ECO:0000269" key="35">
    <source>
    </source>
</evidence>
<evidence type="ECO:0000269" key="36">
    <source>
    </source>
</evidence>
<evidence type="ECO:0000303" key="37">
    <source>
    </source>
</evidence>
<evidence type="ECO:0000303" key="38">
    <source>
    </source>
</evidence>
<evidence type="ECO:0000305" key="39"/>
<evidence type="ECO:0000305" key="40">
    <source>
    </source>
</evidence>
<evidence type="ECO:0000305" key="41">
    <source>
    </source>
</evidence>
<evidence type="ECO:0000305" key="42">
    <source>
    </source>
</evidence>
<evidence type="ECO:0000305" key="43">
    <source>
    </source>
</evidence>
<evidence type="ECO:0000312" key="44">
    <source>
        <dbReference type="HGNC" id="HGNC:1246"/>
    </source>
</evidence>
<evidence type="ECO:0007744" key="45">
    <source>
        <dbReference type="PDB" id="1APQ"/>
    </source>
</evidence>
<evidence type="ECO:0007744" key="46">
    <source>
        <dbReference type="PDB" id="1GPZ"/>
    </source>
</evidence>
<evidence type="ECO:0007744" key="47">
    <source>
        <dbReference type="PDB" id="2QY0"/>
    </source>
</evidence>
<evidence type="ECO:0007744" key="48">
    <source>
        <dbReference type="PDB" id="6F1C"/>
    </source>
</evidence>
<evidence type="ECO:0007744" key="49">
    <source>
        <dbReference type="PDB" id="6F1D"/>
    </source>
</evidence>
<evidence type="ECO:0007744" key="50">
    <source>
        <dbReference type="PDB" id="6F1H"/>
    </source>
</evidence>
<evidence type="ECO:0007744" key="51">
    <source>
        <dbReference type="PDB" id="6F39"/>
    </source>
</evidence>
<evidence type="ECO:0007829" key="52">
    <source>
        <dbReference type="PDB" id="1APQ"/>
    </source>
</evidence>
<evidence type="ECO:0007829" key="53">
    <source>
        <dbReference type="PDB" id="1GPZ"/>
    </source>
</evidence>
<evidence type="ECO:0007829" key="54">
    <source>
        <dbReference type="PDB" id="1MD7"/>
    </source>
</evidence>
<evidence type="ECO:0007829" key="55">
    <source>
        <dbReference type="PDB" id="1MD8"/>
    </source>
</evidence>
<evidence type="ECO:0007829" key="56">
    <source>
        <dbReference type="PDB" id="2QY0"/>
    </source>
</evidence>
<evidence type="ECO:0007829" key="57">
    <source>
        <dbReference type="PDB" id="6F1D"/>
    </source>
</evidence>
<dbReference type="EC" id="3.4.21.41" evidence="5 6 30"/>
<dbReference type="EMBL" id="M14058">
    <property type="protein sequence ID" value="AAA51851.1"/>
    <property type="molecule type" value="mRNA"/>
</dbReference>
<dbReference type="EMBL" id="X04701">
    <property type="protein sequence ID" value="CAA28407.1"/>
    <property type="molecule type" value="mRNA"/>
</dbReference>
<dbReference type="EMBL" id="AB083037">
    <property type="protein sequence ID" value="BAC19850.2"/>
    <property type="molecule type" value="Genomic_DNA"/>
</dbReference>
<dbReference type="EMBL" id="AC094008">
    <property type="status" value="NOT_ANNOTATED_CDS"/>
    <property type="molecule type" value="Genomic_DNA"/>
</dbReference>
<dbReference type="EMBL" id="AC140077">
    <property type="status" value="NOT_ANNOTATED_CDS"/>
    <property type="molecule type" value="Genomic_DNA"/>
</dbReference>
<dbReference type="EMBL" id="CR749540">
    <property type="protein sequence ID" value="CAH18343.1"/>
    <property type="molecule type" value="mRNA"/>
</dbReference>
<dbReference type="EMBL" id="BC035220">
    <property type="protein sequence ID" value="AAH35220.1"/>
    <property type="molecule type" value="mRNA"/>
</dbReference>
<dbReference type="CCDS" id="CCDS81658.1"/>
<dbReference type="PIR" id="A24170">
    <property type="entry name" value="C1HURB"/>
</dbReference>
<dbReference type="RefSeq" id="NP_001724.3">
    <property type="nucleotide sequence ID" value="NM_001733.4"/>
</dbReference>
<dbReference type="PDB" id="1APQ">
    <property type="method" value="NMR"/>
    <property type="chains" value="A=140-192"/>
</dbReference>
<dbReference type="PDB" id="1GPZ">
    <property type="method" value="X-ray"/>
    <property type="resolution" value="2.90 A"/>
    <property type="chains" value="A/B=307-705"/>
</dbReference>
<dbReference type="PDB" id="1MD7">
    <property type="method" value="X-ray"/>
    <property type="resolution" value="3.20 A"/>
    <property type="chains" value="A=375-702"/>
</dbReference>
<dbReference type="PDB" id="1MD8">
    <property type="method" value="X-ray"/>
    <property type="resolution" value="2.80 A"/>
    <property type="chains" value="A=375-703"/>
</dbReference>
<dbReference type="PDB" id="2QY0">
    <property type="method" value="X-ray"/>
    <property type="resolution" value="2.60 A"/>
    <property type="chains" value="A/C=309-463, B/D=464-705"/>
</dbReference>
<dbReference type="PDB" id="6F1C">
    <property type="method" value="X-ray"/>
    <property type="resolution" value="4.20 A"/>
    <property type="chains" value="A/C=18-308"/>
</dbReference>
<dbReference type="PDB" id="6F1D">
    <property type="method" value="X-ray"/>
    <property type="resolution" value="1.95 A"/>
    <property type="chains" value="A=191-307"/>
</dbReference>
<dbReference type="PDB" id="6F1H">
    <property type="method" value="X-ray"/>
    <property type="resolution" value="4.50 A"/>
    <property type="chains" value="A/C=18-308"/>
</dbReference>
<dbReference type="PDB" id="6F39">
    <property type="method" value="X-ray"/>
    <property type="resolution" value="5.80 A"/>
    <property type="chains" value="A/B=22-306"/>
</dbReference>
<dbReference type="PDB" id="9EKD">
    <property type="method" value="X-ray"/>
    <property type="resolution" value="3.28 A"/>
    <property type="chains" value="C/D=308-705"/>
</dbReference>
<dbReference type="PDB" id="9EKE">
    <property type="method" value="X-ray"/>
    <property type="resolution" value="3.10 A"/>
    <property type="chains" value="C/D=308-705"/>
</dbReference>
<dbReference type="PDBsum" id="1APQ"/>
<dbReference type="PDBsum" id="1GPZ"/>
<dbReference type="PDBsum" id="1MD7"/>
<dbReference type="PDBsum" id="1MD8"/>
<dbReference type="PDBsum" id="2QY0"/>
<dbReference type="PDBsum" id="6F1C"/>
<dbReference type="PDBsum" id="6F1D"/>
<dbReference type="PDBsum" id="6F1H"/>
<dbReference type="PDBsum" id="6F39"/>
<dbReference type="PDBsum" id="9EKD"/>
<dbReference type="PDBsum" id="9EKE"/>
<dbReference type="SASBDB" id="P00736"/>
<dbReference type="SMR" id="P00736"/>
<dbReference type="BioGRID" id="107176">
    <property type="interactions" value="15"/>
</dbReference>
<dbReference type="ComplexPortal" id="CPX-1920">
    <property type="entry name" value="Complement C1 complex"/>
</dbReference>
<dbReference type="CORUM" id="P00736"/>
<dbReference type="FunCoup" id="P00736">
    <property type="interactions" value="462"/>
</dbReference>
<dbReference type="IntAct" id="P00736">
    <property type="interactions" value="12"/>
</dbReference>
<dbReference type="MINT" id="P00736"/>
<dbReference type="STRING" id="9606.ENSP00000444271"/>
<dbReference type="BindingDB" id="P00736"/>
<dbReference type="ChEMBL" id="CHEMBL4611"/>
<dbReference type="DrugBank" id="DB09228">
    <property type="generic name" value="Conestat alfa"/>
</dbReference>
<dbReference type="DrugBank" id="DB00111">
    <property type="generic name" value="Daclizumab"/>
</dbReference>
<dbReference type="DrugBank" id="DB12831">
    <property type="generic name" value="Gabexate"/>
</dbReference>
<dbReference type="DrugBank" id="DB06404">
    <property type="generic name" value="Human C1-esterase inhibitor"/>
</dbReference>
<dbReference type="DrugBank" id="DB00110">
    <property type="generic name" value="Palivizumab"/>
</dbReference>
<dbReference type="DrugBank" id="DB01593">
    <property type="generic name" value="Zinc"/>
</dbReference>
<dbReference type="DrugBank" id="DB14487">
    <property type="generic name" value="Zinc acetate"/>
</dbReference>
<dbReference type="DrugBank" id="DB14533">
    <property type="generic name" value="Zinc chloride"/>
</dbReference>
<dbReference type="DrugBank" id="DB14548">
    <property type="generic name" value="Zinc sulfate, unspecified form"/>
</dbReference>
<dbReference type="DrugCentral" id="P00736"/>
<dbReference type="GuidetoPHARMACOLOGY" id="2334"/>
<dbReference type="MEROPS" id="S01.192"/>
<dbReference type="GlyConnect" id="713">
    <property type="glycosylation" value="17 N-Linked glycans (3 sites)"/>
</dbReference>
<dbReference type="GlyCosmos" id="P00736">
    <property type="glycosylation" value="4 sites, 17 glycans"/>
</dbReference>
<dbReference type="GlyGen" id="P00736">
    <property type="glycosylation" value="5 sites, 56 N-linked glycans (3 sites), 1 O-linked glycan (1 site)"/>
</dbReference>
<dbReference type="iPTMnet" id="P00736"/>
<dbReference type="PhosphoSitePlus" id="P00736"/>
<dbReference type="BioMuta" id="C1R"/>
<dbReference type="DMDM" id="218511956"/>
<dbReference type="jPOST" id="P00736"/>
<dbReference type="MassIVE" id="P00736"/>
<dbReference type="PaxDb" id="9606-ENSP00000438615"/>
<dbReference type="ProteomicsDB" id="51270"/>
<dbReference type="DNASU" id="715"/>
<dbReference type="GeneID" id="715"/>
<dbReference type="KEGG" id="hsa:715"/>
<dbReference type="UCSC" id="uc031ysf.2">
    <property type="organism name" value="human"/>
</dbReference>
<dbReference type="AGR" id="HGNC:1246"/>
<dbReference type="CTD" id="715"/>
<dbReference type="DisGeNET" id="715"/>
<dbReference type="GeneCards" id="C1R"/>
<dbReference type="GeneReviews" id="C1R"/>
<dbReference type="HGNC" id="HGNC:1246">
    <property type="gene designation" value="C1R"/>
</dbReference>
<dbReference type="MalaCards" id="C1R"/>
<dbReference type="MIM" id="130080">
    <property type="type" value="phenotype"/>
</dbReference>
<dbReference type="MIM" id="216950">
    <property type="type" value="phenotype"/>
</dbReference>
<dbReference type="MIM" id="613785">
    <property type="type" value="gene"/>
</dbReference>
<dbReference type="neXtProt" id="NX_P00736"/>
<dbReference type="Orphanet" id="300345">
    <property type="disease" value="Autosomal systemic lupus erythematosus"/>
</dbReference>
<dbReference type="Orphanet" id="169147">
    <property type="disease" value="Immunodeficiency due to a classical component pathway complement deficiency"/>
</dbReference>
<dbReference type="Orphanet" id="75392">
    <property type="disease" value="Periodontal Ehlers-Danlos syndrome"/>
</dbReference>
<dbReference type="PharmGKB" id="PA25635"/>
<dbReference type="eggNOG" id="KOG3627">
    <property type="taxonomic scope" value="Eukaryota"/>
</dbReference>
<dbReference type="InParanoid" id="P00736"/>
<dbReference type="OrthoDB" id="6261922at2759"/>
<dbReference type="PAN-GO" id="P00736">
    <property type="GO annotations" value="4 GO annotations based on evolutionary models"/>
</dbReference>
<dbReference type="PhylomeDB" id="P00736"/>
<dbReference type="TreeFam" id="TF330373"/>
<dbReference type="BRENDA" id="3.4.21.41">
    <property type="organism ID" value="2681"/>
</dbReference>
<dbReference type="PathwayCommons" id="P00736"/>
<dbReference type="Reactome" id="R-HSA-166663">
    <property type="pathway name" value="Initial triggering of complement"/>
</dbReference>
<dbReference type="Reactome" id="R-HSA-173623">
    <property type="pathway name" value="Classical antibody-mediated complement activation"/>
</dbReference>
<dbReference type="Reactome" id="R-HSA-977606">
    <property type="pathway name" value="Regulation of Complement cascade"/>
</dbReference>
<dbReference type="SABIO-RK" id="P00736"/>
<dbReference type="SignaLink" id="P00736"/>
<dbReference type="SIGNOR" id="P00736"/>
<dbReference type="BioGRID-ORCS" id="715">
    <property type="hits" value="5 hits in 240 CRISPR screens"/>
</dbReference>
<dbReference type="ChiTaRS" id="C1R">
    <property type="organism name" value="human"/>
</dbReference>
<dbReference type="EvolutionaryTrace" id="P00736"/>
<dbReference type="GeneWiki" id="C1R_(gene)"/>
<dbReference type="GenomeRNAi" id="715"/>
<dbReference type="Pharos" id="P00736">
    <property type="development level" value="Tclin"/>
</dbReference>
<dbReference type="PRO" id="PR:P00736"/>
<dbReference type="Proteomes" id="UP000005640">
    <property type="component" value="Unplaced"/>
</dbReference>
<dbReference type="RNAct" id="P00736">
    <property type="molecule type" value="protein"/>
</dbReference>
<dbReference type="GO" id="GO:0072562">
    <property type="term" value="C:blood microparticle"/>
    <property type="evidence" value="ECO:0007005"/>
    <property type="project" value="UniProtKB"/>
</dbReference>
<dbReference type="GO" id="GO:0070062">
    <property type="term" value="C:extracellular exosome"/>
    <property type="evidence" value="ECO:0007005"/>
    <property type="project" value="UniProtKB"/>
</dbReference>
<dbReference type="GO" id="GO:0005576">
    <property type="term" value="C:extracellular region"/>
    <property type="evidence" value="ECO:0000304"/>
    <property type="project" value="Reactome"/>
</dbReference>
<dbReference type="GO" id="GO:0005615">
    <property type="term" value="C:extracellular space"/>
    <property type="evidence" value="ECO:0000314"/>
    <property type="project" value="CAFA"/>
</dbReference>
<dbReference type="GO" id="GO:0005509">
    <property type="term" value="F:calcium ion binding"/>
    <property type="evidence" value="ECO:0000314"/>
    <property type="project" value="CAFA"/>
</dbReference>
<dbReference type="GO" id="GO:0042802">
    <property type="term" value="F:identical protein binding"/>
    <property type="evidence" value="ECO:0000353"/>
    <property type="project" value="IntAct"/>
</dbReference>
<dbReference type="GO" id="GO:0140313">
    <property type="term" value="F:molecular sequestering activity"/>
    <property type="evidence" value="ECO:0000269"/>
    <property type="project" value="DisProt"/>
</dbReference>
<dbReference type="GO" id="GO:0004252">
    <property type="term" value="F:serine-type endopeptidase activity"/>
    <property type="evidence" value="ECO:0000269"/>
    <property type="project" value="Reactome"/>
</dbReference>
<dbReference type="GO" id="GO:0008236">
    <property type="term" value="F:serine-type peptidase activity"/>
    <property type="evidence" value="ECO:0000304"/>
    <property type="project" value="ProtInc"/>
</dbReference>
<dbReference type="GO" id="GO:0006958">
    <property type="term" value="P:complement activation, classical pathway"/>
    <property type="evidence" value="ECO:0000304"/>
    <property type="project" value="Reactome"/>
</dbReference>
<dbReference type="GO" id="GO:0006955">
    <property type="term" value="P:immune response"/>
    <property type="evidence" value="ECO:0000304"/>
    <property type="project" value="ProtInc"/>
</dbReference>
<dbReference type="GO" id="GO:0045087">
    <property type="term" value="P:innate immune response"/>
    <property type="evidence" value="ECO:0007669"/>
    <property type="project" value="UniProtKB-KW"/>
</dbReference>
<dbReference type="GO" id="GO:0031638">
    <property type="term" value="P:zymogen activation"/>
    <property type="evidence" value="ECO:0000314"/>
    <property type="project" value="CAFA"/>
</dbReference>
<dbReference type="CDD" id="cd00033">
    <property type="entry name" value="CCP"/>
    <property type="match status" value="2"/>
</dbReference>
<dbReference type="CDD" id="cd00041">
    <property type="entry name" value="CUB"/>
    <property type="match status" value="2"/>
</dbReference>
<dbReference type="CDD" id="cd00054">
    <property type="entry name" value="EGF_CA"/>
    <property type="match status" value="1"/>
</dbReference>
<dbReference type="CDD" id="cd00190">
    <property type="entry name" value="Tryp_SPc"/>
    <property type="match status" value="1"/>
</dbReference>
<dbReference type="DisProt" id="DP00621"/>
<dbReference type="FunFam" id="2.10.25.10:FF:000419">
    <property type="entry name" value="Complement C1r subcomponent"/>
    <property type="match status" value="1"/>
</dbReference>
<dbReference type="FunFam" id="2.10.70.10:FF:000040">
    <property type="entry name" value="Complement C1r subcomponent"/>
    <property type="match status" value="1"/>
</dbReference>
<dbReference type="FunFam" id="2.40.10.10:FF:000037">
    <property type="entry name" value="Complement C1r subcomponent"/>
    <property type="match status" value="1"/>
</dbReference>
<dbReference type="FunFam" id="2.40.10.10:FF:000054">
    <property type="entry name" value="Complement C1r subcomponent"/>
    <property type="match status" value="1"/>
</dbReference>
<dbReference type="FunFam" id="2.60.120.290:FF:000028">
    <property type="entry name" value="Complement C1r subcomponent"/>
    <property type="match status" value="1"/>
</dbReference>
<dbReference type="FunFam" id="2.10.70.10:FF:000016">
    <property type="entry name" value="Mannan-binding lectin serine protease 1"/>
    <property type="match status" value="1"/>
</dbReference>
<dbReference type="FunFam" id="2.60.120.290:FF:000006">
    <property type="entry name" value="Mannan-binding lectin serine protease 1"/>
    <property type="match status" value="1"/>
</dbReference>
<dbReference type="Gene3D" id="2.10.70.10">
    <property type="entry name" value="Complement Module, domain 1"/>
    <property type="match status" value="2"/>
</dbReference>
<dbReference type="Gene3D" id="2.10.25.10">
    <property type="entry name" value="Laminin"/>
    <property type="match status" value="1"/>
</dbReference>
<dbReference type="Gene3D" id="2.60.120.290">
    <property type="entry name" value="Spermadhesin, CUB domain"/>
    <property type="match status" value="2"/>
</dbReference>
<dbReference type="Gene3D" id="2.40.10.10">
    <property type="entry name" value="Trypsin-like serine proteases"/>
    <property type="match status" value="3"/>
</dbReference>
<dbReference type="InterPro" id="IPR000859">
    <property type="entry name" value="CUB_dom"/>
</dbReference>
<dbReference type="InterPro" id="IPR001881">
    <property type="entry name" value="EGF-like_Ca-bd_dom"/>
</dbReference>
<dbReference type="InterPro" id="IPR000742">
    <property type="entry name" value="EGF-like_dom"/>
</dbReference>
<dbReference type="InterPro" id="IPR018097">
    <property type="entry name" value="EGF_Ca-bd_CS"/>
</dbReference>
<dbReference type="InterPro" id="IPR024175">
    <property type="entry name" value="Pept_S1A_C1r/C1S/mannan-bd"/>
</dbReference>
<dbReference type="InterPro" id="IPR009003">
    <property type="entry name" value="Peptidase_S1_PA"/>
</dbReference>
<dbReference type="InterPro" id="IPR043504">
    <property type="entry name" value="Peptidase_S1_PA_chymotrypsin"/>
</dbReference>
<dbReference type="InterPro" id="IPR001314">
    <property type="entry name" value="Peptidase_S1A"/>
</dbReference>
<dbReference type="InterPro" id="IPR035914">
    <property type="entry name" value="Sperma_CUB_dom_sf"/>
</dbReference>
<dbReference type="InterPro" id="IPR035976">
    <property type="entry name" value="Sushi/SCR/CCP_sf"/>
</dbReference>
<dbReference type="InterPro" id="IPR000436">
    <property type="entry name" value="Sushi_SCR_CCP_dom"/>
</dbReference>
<dbReference type="InterPro" id="IPR001254">
    <property type="entry name" value="Trypsin_dom"/>
</dbReference>
<dbReference type="InterPro" id="IPR033116">
    <property type="entry name" value="TRYPSIN_SER"/>
</dbReference>
<dbReference type="PANTHER" id="PTHR24255:SF25">
    <property type="entry name" value="COMPLEMENT C1R SUBCOMPONENT"/>
    <property type="match status" value="1"/>
</dbReference>
<dbReference type="PANTHER" id="PTHR24255">
    <property type="entry name" value="COMPLEMENT COMPONENT 1, S SUBCOMPONENT-RELATED"/>
    <property type="match status" value="1"/>
</dbReference>
<dbReference type="Pfam" id="PF00431">
    <property type="entry name" value="CUB"/>
    <property type="match status" value="2"/>
</dbReference>
<dbReference type="Pfam" id="PF14670">
    <property type="entry name" value="FXa_inhibition"/>
    <property type="match status" value="1"/>
</dbReference>
<dbReference type="Pfam" id="PF00084">
    <property type="entry name" value="Sushi"/>
    <property type="match status" value="2"/>
</dbReference>
<dbReference type="Pfam" id="PF00089">
    <property type="entry name" value="Trypsin"/>
    <property type="match status" value="1"/>
</dbReference>
<dbReference type="PIRSF" id="PIRSF001155">
    <property type="entry name" value="C1r_C1s_MASP"/>
    <property type="match status" value="1"/>
</dbReference>
<dbReference type="PRINTS" id="PR00722">
    <property type="entry name" value="CHYMOTRYPSIN"/>
</dbReference>
<dbReference type="SMART" id="SM00032">
    <property type="entry name" value="CCP"/>
    <property type="match status" value="2"/>
</dbReference>
<dbReference type="SMART" id="SM00042">
    <property type="entry name" value="CUB"/>
    <property type="match status" value="2"/>
</dbReference>
<dbReference type="SMART" id="SM00181">
    <property type="entry name" value="EGF"/>
    <property type="match status" value="1"/>
</dbReference>
<dbReference type="SMART" id="SM00179">
    <property type="entry name" value="EGF_CA"/>
    <property type="match status" value="1"/>
</dbReference>
<dbReference type="SMART" id="SM00020">
    <property type="entry name" value="Tryp_SPc"/>
    <property type="match status" value="1"/>
</dbReference>
<dbReference type="SUPFAM" id="SSF57535">
    <property type="entry name" value="Complement control module/SCR domain"/>
    <property type="match status" value="2"/>
</dbReference>
<dbReference type="SUPFAM" id="SSF57196">
    <property type="entry name" value="EGF/Laminin"/>
    <property type="match status" value="1"/>
</dbReference>
<dbReference type="SUPFAM" id="SSF49854">
    <property type="entry name" value="Spermadhesin, CUB domain"/>
    <property type="match status" value="2"/>
</dbReference>
<dbReference type="SUPFAM" id="SSF50494">
    <property type="entry name" value="Trypsin-like serine proteases"/>
    <property type="match status" value="1"/>
</dbReference>
<dbReference type="PROSITE" id="PS00010">
    <property type="entry name" value="ASX_HYDROXYL"/>
    <property type="match status" value="1"/>
</dbReference>
<dbReference type="PROSITE" id="PS01180">
    <property type="entry name" value="CUB"/>
    <property type="match status" value="2"/>
</dbReference>
<dbReference type="PROSITE" id="PS01186">
    <property type="entry name" value="EGF_2"/>
    <property type="match status" value="1"/>
</dbReference>
<dbReference type="PROSITE" id="PS01187">
    <property type="entry name" value="EGF_CA"/>
    <property type="match status" value="1"/>
</dbReference>
<dbReference type="PROSITE" id="PS50923">
    <property type="entry name" value="SUSHI"/>
    <property type="match status" value="2"/>
</dbReference>
<dbReference type="PROSITE" id="PS50240">
    <property type="entry name" value="TRYPSIN_DOM"/>
    <property type="match status" value="1"/>
</dbReference>
<dbReference type="PROSITE" id="PS00135">
    <property type="entry name" value="TRYPSIN_SER"/>
    <property type="match status" value="1"/>
</dbReference>
<comment type="function">
    <text evidence="5 6 12 14 15 18 21 22 28 29 30">Serine protease component of the complement C1 complex, a multiprotein complex that initiates the classical pathway of the complement system, a cascade of proteins that leads to phagocytosis and breakdown of pathogens and signaling that strengthens the adaptive immune system (PubMed:17996945, PubMed:19473974, PubMed:29449492). C1R catalyzes the first enzymatic step in the classical complement pathway: it is activated by the C1Q subcomplex of the C1 complex, which associates with IgG or IgM immunoglobulins complexed with antigens to form antigen-antibody complexes on the surface of pathogens (PubMed:29449492, PubMed:34155115). Immunoglobulin-binding promotes the autocatalytic cleavage and activation of C1R (PubMed:11445589, PubMed:11673533, PubMed:17996945, PubMed:20178990, PubMed:6254570, PubMed:6271784). Activated C1R then cleaves and activates C1S, the second protease of the classical complement pathway (PubMed:11445589, PubMed:11673533, PubMed:6271784). It is unclear if C1R activates C1S within single, strained C1 complexes or between neighboring C1 complexes on surfaces (PubMed:28104818, PubMed:29311313, PubMed:29449492).</text>
</comment>
<comment type="catalytic activity">
    <reaction evidence="5 6 30">
        <text>Selective cleavage of Lys(or Arg)-|-Ile bond in complement subcomponent C1s to form the active form of C1s (EC 3.4.21.42).</text>
        <dbReference type="EC" id="3.4.21.41"/>
    </reaction>
</comment>
<comment type="activity regulation">
    <text evidence="12 15 29">Activated by the C1Q subcomplex of the C1 complex following C1Q binding to immunoglobulins (IgG or IgM) complexed with antigens to form antigen-antibody complexes on the surface of pathogens (PubMed:17996945, PubMed:20178990, PubMed:6254570). Immunoglobulin-binding promotes autoactivation of C1R, which results in the cleavage of the Arg-Ile bond in the catalytic domain (PubMed:17996945, PubMed:20178990).</text>
</comment>
<comment type="subunit">
    <text evidence="14 18 21 23 24 28 32">Core component of the complement C1 complex, a calcium-dependent complex composed of 1 molecule of the C1Q subcomplex, 2 molecules of C1R and 2 molecules of C1S (PubMed:19473974, PubMed:28104818, PubMed:29311313, PubMed:2988513, PubMed:2989825, PubMed:34155115, PubMed:6952210). The C1Q subcomplex is composed 18 subunits: 3 chains of C1QA, C1QB, and C1QC trimerize to form 6 collagen-like triple helices connected to six globular ligand-recognition modules (PubMed:2988513, PubMed:6952210). Within the C1 complex, C1R is a dimer of identical chains, each of which is activated by cleavage into two chains, heavy and light, connected by disulfide bonds (PubMed:2988513, PubMed:6952210).</text>
</comment>
<comment type="interaction">
    <interactant intactId="EBI-3926504">
        <id>P00736</id>
    </interactant>
    <interactant intactId="EBI-3926504">
        <id>P00736</id>
        <label>C1R</label>
    </interactant>
    <organismsDiffer>false</organismsDiffer>
    <experiments>2</experiments>
</comment>
<comment type="interaction">
    <interactant intactId="EBI-3926504">
        <id>P00736</id>
    </interactant>
    <interactant intactId="EBI-2810045">
        <id>P09871</id>
        <label>C1S</label>
    </interactant>
    <organismsDiffer>false</organismsDiffer>
    <experiments>7</experiments>
</comment>
<comment type="interaction">
    <interactant intactId="EBI-3926504">
        <id>P00736</id>
    </interactant>
    <interactant intactId="EBI-1223454">
        <id>P05155</id>
        <label>SERPING1</label>
    </interactant>
    <organismsDiffer>false</organismsDiffer>
    <experiments>2</experiments>
</comment>
<comment type="subcellular location">
    <subcellularLocation>
        <location evidence="17">Secreted</location>
    </subcellularLocation>
    <subcellularLocation>
        <location evidence="28">Cell surface</location>
    </subcellularLocation>
    <text evidence="28">Recruited to the surface of pathogens by the C1Q subcomplex.</text>
</comment>
<comment type="domain">
    <text evidence="15">The CUB domain 2 shows a compact folded structure in the presence of Ca(2+), whereas it has a flexible, disordered conformation in the absence of Ca(2+) (PubMed:20178990). Ca(2+) could provide a switch between the folded and disordered forms; low Ca(2+) could provide flexibility to promote autoprocessing and activation of CIR (PubMed:20178990).</text>
</comment>
<comment type="PTM">
    <text evidence="5 6 12 15 29 35">Cleaved and activated by autocatalytic processing to generate Complement C1r subcomponent heavy and light chains that are connected by disulfide bonds.</text>
</comment>
<comment type="PTM">
    <text evidence="19">The iron and 2-oxoglutarate dependent 3-hydroxylation of aspartate and asparagine is (R) stereospecific within EGF domains.</text>
</comment>
<comment type="polymorphism">
    <text evidence="20">Complement component C1r deficiency [MIM:216950] leads to the failure of the classical complement system activation pathway (C1 deficiency). Individuals with C1 deficiency are highly susceptible to infections by microorganisms and have greater risk in developing autoimmune diseases such as systemic lupus erythematosus (SLE).</text>
</comment>
<comment type="disease" evidence="17">
    <disease id="DI-04848">
        <name>Ehlers-Danlos syndrome, periodontal type, 1</name>
        <acronym>EDSPD1</acronym>
        <description>A form of Ehlers-Danlos syndrome, a connective tissue disorder characterized by hyperextensible skin, atrophic cutaneous scars due to tissue fragility and joint hyperlaxity. EDSPD1 is characterized by the association of typical features of Ehlers-Danlos syndrome with gingival recession and severe early-onset periodontal disease, leading to premature loss of permanent teeth. EDSPD1 inheritance is autosomal dominant.</description>
        <dbReference type="MIM" id="130080"/>
    </disease>
    <text>The disease is caused by variants affecting the gene represented in this entry.</text>
</comment>
<comment type="similarity">
    <text evidence="3">Belongs to the peptidase S1 family.</text>
</comment>
<gene>
    <name evidence="37 44" type="primary">C1R</name>
</gene>
<protein>
    <recommendedName>
        <fullName evidence="39">Complement C1r subcomponent</fullName>
        <ecNumber evidence="5 6 30">3.4.21.41</ecNumber>
    </recommendedName>
    <alternativeName>
        <fullName>Complement component 1 subcomponent r</fullName>
    </alternativeName>
    <component>
        <recommendedName>
            <fullName>Complement C1r subcomponent heavy chain</fullName>
        </recommendedName>
        <alternativeName>
            <fullName evidence="38">Complement C1r subcomponent chain A</fullName>
        </alternativeName>
    </component>
    <component>
        <recommendedName>
            <fullName>Complement C1r subcomponent light chain</fullName>
        </recommendedName>
        <alternativeName>
            <fullName evidence="38">Complement C1r subcomponent chain B</fullName>
        </alternativeName>
    </component>
</protein>